<geneLocation type="chloroplast"/>
<feature type="chain" id="PRO_0000132674" description="Small ribosomal subunit protein uS4c">
    <location>
        <begin position="1"/>
        <end position="201"/>
    </location>
</feature>
<feature type="domain" description="S4 RNA-binding">
    <location>
        <begin position="89"/>
        <end position="149"/>
    </location>
</feature>
<feature type="region of interest" description="Disordered" evidence="2">
    <location>
        <begin position="17"/>
        <end position="44"/>
    </location>
</feature>
<evidence type="ECO:0000250" key="1"/>
<evidence type="ECO:0000256" key="2">
    <source>
        <dbReference type="SAM" id="MobiDB-lite"/>
    </source>
</evidence>
<evidence type="ECO:0000305" key="3"/>
<organism>
    <name type="scientific">Nicotiana tabacum</name>
    <name type="common">Common tobacco</name>
    <dbReference type="NCBI Taxonomy" id="4097"/>
    <lineage>
        <taxon>Eukaryota</taxon>
        <taxon>Viridiplantae</taxon>
        <taxon>Streptophyta</taxon>
        <taxon>Embryophyta</taxon>
        <taxon>Tracheophyta</taxon>
        <taxon>Spermatophyta</taxon>
        <taxon>Magnoliopsida</taxon>
        <taxon>eudicotyledons</taxon>
        <taxon>Gunneridae</taxon>
        <taxon>Pentapetalae</taxon>
        <taxon>asterids</taxon>
        <taxon>lamiids</taxon>
        <taxon>Solanales</taxon>
        <taxon>Solanaceae</taxon>
        <taxon>Nicotianoideae</taxon>
        <taxon>Nicotianeae</taxon>
        <taxon>Nicotiana</taxon>
    </lineage>
</organism>
<dbReference type="EMBL" id="Z00044">
    <property type="protein sequence ID" value="CAA77354.1"/>
    <property type="molecule type" value="Genomic_DNA"/>
</dbReference>
<dbReference type="PIR" id="A02705">
    <property type="entry name" value="R3NT4"/>
</dbReference>
<dbReference type="RefSeq" id="NP_054500.1">
    <property type="nucleotide sequence ID" value="NC_001879.2"/>
</dbReference>
<dbReference type="SMR" id="P06359"/>
<dbReference type="GeneID" id="800429"/>
<dbReference type="KEGG" id="nta:800429"/>
<dbReference type="OMA" id="QLVVELY"/>
<dbReference type="OrthoDB" id="2443at2759"/>
<dbReference type="Proteomes" id="UP000084051">
    <property type="component" value="Unplaced"/>
</dbReference>
<dbReference type="GO" id="GO:0009507">
    <property type="term" value="C:chloroplast"/>
    <property type="evidence" value="ECO:0007669"/>
    <property type="project" value="UniProtKB-SubCell"/>
</dbReference>
<dbReference type="GO" id="GO:0015935">
    <property type="term" value="C:small ribosomal subunit"/>
    <property type="evidence" value="ECO:0007669"/>
    <property type="project" value="InterPro"/>
</dbReference>
<dbReference type="GO" id="GO:0019843">
    <property type="term" value="F:rRNA binding"/>
    <property type="evidence" value="ECO:0007669"/>
    <property type="project" value="UniProtKB-UniRule"/>
</dbReference>
<dbReference type="GO" id="GO:0003735">
    <property type="term" value="F:structural constituent of ribosome"/>
    <property type="evidence" value="ECO:0007669"/>
    <property type="project" value="InterPro"/>
</dbReference>
<dbReference type="GO" id="GO:0006412">
    <property type="term" value="P:translation"/>
    <property type="evidence" value="ECO:0007669"/>
    <property type="project" value="UniProtKB-UniRule"/>
</dbReference>
<dbReference type="CDD" id="cd00165">
    <property type="entry name" value="S4"/>
    <property type="match status" value="1"/>
</dbReference>
<dbReference type="FunFam" id="1.10.1050.10:FF:000002">
    <property type="entry name" value="30S ribosomal protein S4, chloroplastic"/>
    <property type="match status" value="1"/>
</dbReference>
<dbReference type="FunFam" id="3.10.290.10:FF:000081">
    <property type="entry name" value="30S ribosomal protein S4, chloroplastic"/>
    <property type="match status" value="1"/>
</dbReference>
<dbReference type="Gene3D" id="1.10.1050.10">
    <property type="entry name" value="Ribosomal Protein S4 Delta 41, Chain A, domain 1"/>
    <property type="match status" value="1"/>
</dbReference>
<dbReference type="Gene3D" id="3.10.290.10">
    <property type="entry name" value="RNA-binding S4 domain"/>
    <property type="match status" value="1"/>
</dbReference>
<dbReference type="HAMAP" id="MF_01306_B">
    <property type="entry name" value="Ribosomal_uS4_B"/>
    <property type="match status" value="1"/>
</dbReference>
<dbReference type="InterPro" id="IPR022801">
    <property type="entry name" value="Ribosomal_uS4"/>
</dbReference>
<dbReference type="InterPro" id="IPR005709">
    <property type="entry name" value="Ribosomal_uS4_bac-type"/>
</dbReference>
<dbReference type="InterPro" id="IPR018079">
    <property type="entry name" value="Ribosomal_uS4_CS"/>
</dbReference>
<dbReference type="InterPro" id="IPR001912">
    <property type="entry name" value="Ribosomal_uS4_N"/>
</dbReference>
<dbReference type="InterPro" id="IPR002942">
    <property type="entry name" value="S4_RNA-bd"/>
</dbReference>
<dbReference type="InterPro" id="IPR036986">
    <property type="entry name" value="S4_RNA-bd_sf"/>
</dbReference>
<dbReference type="NCBIfam" id="NF003717">
    <property type="entry name" value="PRK05327.1"/>
    <property type="match status" value="1"/>
</dbReference>
<dbReference type="NCBIfam" id="TIGR01017">
    <property type="entry name" value="rpsD_bact"/>
    <property type="match status" value="1"/>
</dbReference>
<dbReference type="PANTHER" id="PTHR11831">
    <property type="entry name" value="30S 40S RIBOSOMAL PROTEIN"/>
    <property type="match status" value="1"/>
</dbReference>
<dbReference type="PANTHER" id="PTHR11831:SF4">
    <property type="entry name" value="SMALL RIBOSOMAL SUBUNIT PROTEIN US4M"/>
    <property type="match status" value="1"/>
</dbReference>
<dbReference type="Pfam" id="PF00163">
    <property type="entry name" value="Ribosomal_S4"/>
    <property type="match status" value="1"/>
</dbReference>
<dbReference type="Pfam" id="PF01479">
    <property type="entry name" value="S4"/>
    <property type="match status" value="1"/>
</dbReference>
<dbReference type="SMART" id="SM01390">
    <property type="entry name" value="Ribosomal_S4"/>
    <property type="match status" value="1"/>
</dbReference>
<dbReference type="SMART" id="SM00363">
    <property type="entry name" value="S4"/>
    <property type="match status" value="1"/>
</dbReference>
<dbReference type="SUPFAM" id="SSF55174">
    <property type="entry name" value="Alpha-L RNA-binding motif"/>
    <property type="match status" value="1"/>
</dbReference>
<dbReference type="PROSITE" id="PS00632">
    <property type="entry name" value="RIBOSOMAL_S4"/>
    <property type="match status" value="1"/>
</dbReference>
<dbReference type="PROSITE" id="PS50889">
    <property type="entry name" value="S4"/>
    <property type="match status" value="1"/>
</dbReference>
<accession>P06359</accession>
<name>RR4_TOBAC</name>
<sequence>MSRYRGPRFKKIRRLGALPGLTNKKPRNGSDLRNQSRSGKKSQYRIRLEEKQKLRFHYGLTERQLLKYVRIARKAKGSTGQVLLQLLEMRLDNILFRLGMASTIPAARQLVNHRHILVNGRIVDIPSYRCKPRDIITAKDEQKSRALIQISLDSSPHEELPNHLTLHPFQYKGLVNQIIDSKWVGLKINELLVVEYYSRQT</sequence>
<proteinExistence type="inferred from homology"/>
<reference key="1">
    <citation type="journal article" date="1986" name="EMBO J.">
        <title>The complete nucleotide sequence of the tobacco chloroplast genome: its gene organization and expression.</title>
        <authorList>
            <person name="Shinozaki K."/>
            <person name="Ohme M."/>
            <person name="Tanaka M."/>
            <person name="Wakasugi T."/>
            <person name="Hayashida N."/>
            <person name="Matsubayashi T."/>
            <person name="Zaita N."/>
            <person name="Chunwongse J."/>
            <person name="Obokata J."/>
            <person name="Yamaguchi-Shinozaki K."/>
            <person name="Ohto C."/>
            <person name="Torazawa K."/>
            <person name="Meng B.-Y."/>
            <person name="Sugita M."/>
            <person name="Deno H."/>
            <person name="Kamogashira T."/>
            <person name="Yamada K."/>
            <person name="Kusuda J."/>
            <person name="Takaiwa F."/>
            <person name="Kato A."/>
            <person name="Tohdoh N."/>
            <person name="Shimada H."/>
            <person name="Sugiura M."/>
        </authorList>
    </citation>
    <scope>NUCLEOTIDE SEQUENCE [LARGE SCALE GENOMIC DNA]</scope>
    <source>
        <strain>cv. Bright Yellow 4</strain>
    </source>
</reference>
<gene>
    <name type="primary">rps4</name>
</gene>
<protein>
    <recommendedName>
        <fullName evidence="3">Small ribosomal subunit protein uS4c</fullName>
    </recommendedName>
    <alternativeName>
        <fullName>30S ribosomal protein S4, chloroplastic</fullName>
    </alternativeName>
</protein>
<keyword id="KW-0150">Chloroplast</keyword>
<keyword id="KW-0934">Plastid</keyword>
<keyword id="KW-1185">Reference proteome</keyword>
<keyword id="KW-0687">Ribonucleoprotein</keyword>
<keyword id="KW-0689">Ribosomal protein</keyword>
<keyword id="KW-0694">RNA-binding</keyword>
<keyword id="KW-0699">rRNA-binding</keyword>
<comment type="function">
    <text evidence="1">One of the primary rRNA binding proteins, it binds directly to 16S rRNA where it nucleates assembly of the body of the 30S subunit.</text>
</comment>
<comment type="function">
    <text evidence="1">With S5 and S12 plays an important role in translational accuracy.</text>
</comment>
<comment type="subunit">
    <text evidence="1">Part of the 30S ribosomal subunit. Contacts protein S5. The interaction surface between S4 and S5 is involved in control of translational fidelity (By similarity).</text>
</comment>
<comment type="subcellular location">
    <subcellularLocation>
        <location>Plastid</location>
        <location>Chloroplast</location>
    </subcellularLocation>
</comment>
<comment type="similarity">
    <text evidence="3">Belongs to the universal ribosomal protein uS4 family.</text>
</comment>